<evidence type="ECO:0000250" key="1"/>
<evidence type="ECO:0000255" key="2">
    <source>
        <dbReference type="PROSITE-ProRule" id="PRU00156"/>
    </source>
</evidence>
<evidence type="ECO:0000305" key="3"/>
<comment type="function">
    <text evidence="1">PPIases accelerate the folding of proteins. It catalyzes the cis-trans isomerization of proline imidic peptide bonds in oligopeptides (By similarity).</text>
</comment>
<comment type="catalytic activity">
    <reaction>
        <text>[protein]-peptidylproline (omega=180) = [protein]-peptidylproline (omega=0)</text>
        <dbReference type="Rhea" id="RHEA:16237"/>
        <dbReference type="Rhea" id="RHEA-COMP:10747"/>
        <dbReference type="Rhea" id="RHEA-COMP:10748"/>
        <dbReference type="ChEBI" id="CHEBI:83833"/>
        <dbReference type="ChEBI" id="CHEBI:83834"/>
        <dbReference type="EC" id="5.2.1.8"/>
    </reaction>
</comment>
<comment type="subcellular location">
    <subcellularLocation>
        <location evidence="1">Cytoplasm</location>
    </subcellularLocation>
</comment>
<comment type="similarity">
    <text evidence="3">Belongs to the cyclophilin-type PPIase family. PPIase D subfamily.</text>
</comment>
<proteinExistence type="inferred from homology"/>
<organism>
    <name type="scientific">Gibberella zeae (strain ATCC MYA-4620 / CBS 123657 / FGSC 9075 / NRRL 31084 / PH-1)</name>
    <name type="common">Wheat head blight fungus</name>
    <name type="synonym">Fusarium graminearum</name>
    <dbReference type="NCBI Taxonomy" id="229533"/>
    <lineage>
        <taxon>Eukaryota</taxon>
        <taxon>Fungi</taxon>
        <taxon>Dikarya</taxon>
        <taxon>Ascomycota</taxon>
        <taxon>Pezizomycotina</taxon>
        <taxon>Sordariomycetes</taxon>
        <taxon>Hypocreomycetidae</taxon>
        <taxon>Hypocreales</taxon>
        <taxon>Nectriaceae</taxon>
        <taxon>Fusarium</taxon>
    </lineage>
</organism>
<sequence>MAAEGDSPARPRVYFDISIGGKSVGRITMELYADLVPKTADNFRSLCTGEKGIGKSGKPLHYKGSVFHRVIKQFMIQGGDFTAGDGTGGESIYGNKFDDEAFPIKHEKPFLLSMANAGPNTNGSQFFITTVPTPHLDGKHVVFGEVLNGKSVVRQIENLTTQSGDRPAKEALIVDCGELTGDAALAADVKQPDALGDPYEDFPEDCTDTLDAVAVLKIAKASKDYGNTAFKSGNYSLGLDKYQKGLRYINEEPELEDQPQSIKDELEALRFSLNNNSALLNIKLEAWDDAARSASAALEVGGVKDADRAKAFYRRGLANIHLKDEEAAVRDLTEANKLAPNDSAITRELNGVKTKAAARAAKEKAAYKKFFT</sequence>
<feature type="chain" id="PRO_0000232949" description="Peptidyl-prolyl cis-trans isomerase D">
    <location>
        <begin position="1"/>
        <end position="372"/>
    </location>
</feature>
<feature type="domain" description="PPIase cyclophilin-type" evidence="2">
    <location>
        <begin position="14"/>
        <end position="178"/>
    </location>
</feature>
<feature type="repeat" description="TPR 1">
    <location>
        <begin position="219"/>
        <end position="252"/>
    </location>
</feature>
<feature type="repeat" description="TPR 2">
    <location>
        <begin position="271"/>
        <end position="304"/>
    </location>
</feature>
<feature type="repeat" description="TPR 3">
    <location>
        <begin position="309"/>
        <end position="342"/>
    </location>
</feature>
<accession>Q4HXF6</accession>
<accession>A0A0E0RWX6</accession>
<accession>V6RSS3</accession>
<dbReference type="EC" id="5.2.1.8"/>
<dbReference type="EMBL" id="DS231669">
    <property type="protein sequence ID" value="ESU17057.1"/>
    <property type="molecule type" value="Genomic_DNA"/>
</dbReference>
<dbReference type="EMBL" id="HG970332">
    <property type="protein sequence ID" value="CEF75751.1"/>
    <property type="molecule type" value="Genomic_DNA"/>
</dbReference>
<dbReference type="RefSeq" id="XP_011319319.1">
    <property type="nucleotide sequence ID" value="XM_011321017.1"/>
</dbReference>
<dbReference type="SMR" id="Q4HXF6"/>
<dbReference type="FunCoup" id="Q4HXF6">
    <property type="interactions" value="1103"/>
</dbReference>
<dbReference type="STRING" id="229533.Q4HXF6"/>
<dbReference type="GeneID" id="23557261"/>
<dbReference type="KEGG" id="fgr:FGSG_10352"/>
<dbReference type="VEuPathDB" id="FungiDB:FGRAMPH1_01G07895"/>
<dbReference type="eggNOG" id="KOG0546">
    <property type="taxonomic scope" value="Eukaryota"/>
</dbReference>
<dbReference type="HOGENOM" id="CLU_012062_37_0_1"/>
<dbReference type="InParanoid" id="Q4HXF6"/>
<dbReference type="OrthoDB" id="81523at110618"/>
<dbReference type="Proteomes" id="UP000070720">
    <property type="component" value="Chromosome 1"/>
</dbReference>
<dbReference type="GO" id="GO:0005737">
    <property type="term" value="C:cytoplasm"/>
    <property type="evidence" value="ECO:0007669"/>
    <property type="project" value="UniProtKB-SubCell"/>
</dbReference>
<dbReference type="GO" id="GO:0043231">
    <property type="term" value="C:intracellular membrane-bounded organelle"/>
    <property type="evidence" value="ECO:0007669"/>
    <property type="project" value="TreeGrafter"/>
</dbReference>
<dbReference type="GO" id="GO:0016018">
    <property type="term" value="F:cyclosporin A binding"/>
    <property type="evidence" value="ECO:0007669"/>
    <property type="project" value="TreeGrafter"/>
</dbReference>
<dbReference type="GO" id="GO:0003755">
    <property type="term" value="F:peptidyl-prolyl cis-trans isomerase activity"/>
    <property type="evidence" value="ECO:0007669"/>
    <property type="project" value="UniProtKB-KW"/>
</dbReference>
<dbReference type="GO" id="GO:0006457">
    <property type="term" value="P:protein folding"/>
    <property type="evidence" value="ECO:0007669"/>
    <property type="project" value="InterPro"/>
</dbReference>
<dbReference type="CDD" id="cd01926">
    <property type="entry name" value="cyclophilin_ABH_like"/>
    <property type="match status" value="1"/>
</dbReference>
<dbReference type="FunFam" id="2.40.100.10:FF:000009">
    <property type="entry name" value="Peptidyl-prolyl cis-trans isomerase D"/>
    <property type="match status" value="1"/>
</dbReference>
<dbReference type="FunFam" id="1.25.40.10:FF:000029">
    <property type="entry name" value="peptidyl-prolyl cis-trans isomerase D"/>
    <property type="match status" value="1"/>
</dbReference>
<dbReference type="Gene3D" id="2.40.100.10">
    <property type="entry name" value="Cyclophilin-like"/>
    <property type="match status" value="1"/>
</dbReference>
<dbReference type="Gene3D" id="1.25.40.10">
    <property type="entry name" value="Tetratricopeptide repeat domain"/>
    <property type="match status" value="1"/>
</dbReference>
<dbReference type="InterPro" id="IPR029000">
    <property type="entry name" value="Cyclophilin-like_dom_sf"/>
</dbReference>
<dbReference type="InterPro" id="IPR020892">
    <property type="entry name" value="Cyclophilin-type_PPIase_CS"/>
</dbReference>
<dbReference type="InterPro" id="IPR002130">
    <property type="entry name" value="Cyclophilin-type_PPIase_dom"/>
</dbReference>
<dbReference type="InterPro" id="IPR011990">
    <property type="entry name" value="TPR-like_helical_dom_sf"/>
</dbReference>
<dbReference type="InterPro" id="IPR019734">
    <property type="entry name" value="TPR_rpt"/>
</dbReference>
<dbReference type="PANTHER" id="PTHR11071">
    <property type="entry name" value="PEPTIDYL-PROLYL CIS-TRANS ISOMERASE"/>
    <property type="match status" value="1"/>
</dbReference>
<dbReference type="PANTHER" id="PTHR11071:SF561">
    <property type="entry name" value="PEPTIDYL-PROLYL CIS-TRANS ISOMERASE D-RELATED"/>
    <property type="match status" value="1"/>
</dbReference>
<dbReference type="Pfam" id="PF00160">
    <property type="entry name" value="Pro_isomerase"/>
    <property type="match status" value="1"/>
</dbReference>
<dbReference type="PRINTS" id="PR00153">
    <property type="entry name" value="CSAPPISMRASE"/>
</dbReference>
<dbReference type="SMART" id="SM00028">
    <property type="entry name" value="TPR"/>
    <property type="match status" value="2"/>
</dbReference>
<dbReference type="SUPFAM" id="SSF50891">
    <property type="entry name" value="Cyclophilin-like"/>
    <property type="match status" value="1"/>
</dbReference>
<dbReference type="SUPFAM" id="SSF48452">
    <property type="entry name" value="TPR-like"/>
    <property type="match status" value="1"/>
</dbReference>
<dbReference type="PROSITE" id="PS00170">
    <property type="entry name" value="CSA_PPIASE_1"/>
    <property type="match status" value="1"/>
</dbReference>
<dbReference type="PROSITE" id="PS50072">
    <property type="entry name" value="CSA_PPIASE_2"/>
    <property type="match status" value="1"/>
</dbReference>
<dbReference type="PROSITE" id="PS50005">
    <property type="entry name" value="TPR"/>
    <property type="match status" value="2"/>
</dbReference>
<dbReference type="PROSITE" id="PS50293">
    <property type="entry name" value="TPR_REGION"/>
    <property type="match status" value="1"/>
</dbReference>
<keyword id="KW-0963">Cytoplasm</keyword>
<keyword id="KW-0413">Isomerase</keyword>
<keyword id="KW-1185">Reference proteome</keyword>
<keyword id="KW-0677">Repeat</keyword>
<keyword id="KW-0697">Rotamase</keyword>
<keyword id="KW-0802">TPR repeat</keyword>
<name>PPID_GIBZE</name>
<protein>
    <recommendedName>
        <fullName>Peptidyl-prolyl cis-trans isomerase D</fullName>
        <shortName>PPIase D</shortName>
        <ecNumber>5.2.1.8</ecNumber>
    </recommendedName>
    <alternativeName>
        <fullName>Rotamase D</fullName>
    </alternativeName>
</protein>
<gene>
    <name type="primary">CPR6</name>
    <name type="ORF">FGRRES_10352</name>
    <name type="ORF">FGSG_10352</name>
</gene>
<reference key="1">
    <citation type="journal article" date="2007" name="Science">
        <title>The Fusarium graminearum genome reveals a link between localized polymorphism and pathogen specialization.</title>
        <authorList>
            <person name="Cuomo C.A."/>
            <person name="Gueldener U."/>
            <person name="Xu J.-R."/>
            <person name="Trail F."/>
            <person name="Turgeon B.G."/>
            <person name="Di Pietro A."/>
            <person name="Walton J.D."/>
            <person name="Ma L.-J."/>
            <person name="Baker S.E."/>
            <person name="Rep M."/>
            <person name="Adam G."/>
            <person name="Antoniw J."/>
            <person name="Baldwin T."/>
            <person name="Calvo S.E."/>
            <person name="Chang Y.-L."/>
            <person name="DeCaprio D."/>
            <person name="Gale L.R."/>
            <person name="Gnerre S."/>
            <person name="Goswami R.S."/>
            <person name="Hammond-Kosack K."/>
            <person name="Harris L.J."/>
            <person name="Hilburn K."/>
            <person name="Kennell J.C."/>
            <person name="Kroken S."/>
            <person name="Magnuson J.K."/>
            <person name="Mannhaupt G."/>
            <person name="Mauceli E.W."/>
            <person name="Mewes H.-W."/>
            <person name="Mitterbauer R."/>
            <person name="Muehlbauer G."/>
            <person name="Muensterkoetter M."/>
            <person name="Nelson D."/>
            <person name="O'Donnell K."/>
            <person name="Ouellet T."/>
            <person name="Qi W."/>
            <person name="Quesneville H."/>
            <person name="Roncero M.I.G."/>
            <person name="Seong K.-Y."/>
            <person name="Tetko I.V."/>
            <person name="Urban M."/>
            <person name="Waalwijk C."/>
            <person name="Ward T.J."/>
            <person name="Yao J."/>
            <person name="Birren B.W."/>
            <person name="Kistler H.C."/>
        </authorList>
    </citation>
    <scope>NUCLEOTIDE SEQUENCE [LARGE SCALE GENOMIC DNA]</scope>
    <source>
        <strain>ATCC MYA-4620 / CBS 123657 / FGSC 9075 / NRRL 31084 / PH-1</strain>
    </source>
</reference>
<reference key="2">
    <citation type="journal article" date="2010" name="Nature">
        <title>Comparative genomics reveals mobile pathogenicity chromosomes in Fusarium.</title>
        <authorList>
            <person name="Ma L.-J."/>
            <person name="van der Does H.C."/>
            <person name="Borkovich K.A."/>
            <person name="Coleman J.J."/>
            <person name="Daboussi M.-J."/>
            <person name="Di Pietro A."/>
            <person name="Dufresne M."/>
            <person name="Freitag M."/>
            <person name="Grabherr M."/>
            <person name="Henrissat B."/>
            <person name="Houterman P.M."/>
            <person name="Kang S."/>
            <person name="Shim W.-B."/>
            <person name="Woloshuk C."/>
            <person name="Xie X."/>
            <person name="Xu J.-R."/>
            <person name="Antoniw J."/>
            <person name="Baker S.E."/>
            <person name="Bluhm B.H."/>
            <person name="Breakspear A."/>
            <person name="Brown D.W."/>
            <person name="Butchko R.A.E."/>
            <person name="Chapman S."/>
            <person name="Coulson R."/>
            <person name="Coutinho P.M."/>
            <person name="Danchin E.G.J."/>
            <person name="Diener A."/>
            <person name="Gale L.R."/>
            <person name="Gardiner D.M."/>
            <person name="Goff S."/>
            <person name="Hammond-Kosack K.E."/>
            <person name="Hilburn K."/>
            <person name="Hua-Van A."/>
            <person name="Jonkers W."/>
            <person name="Kazan K."/>
            <person name="Kodira C.D."/>
            <person name="Koehrsen M."/>
            <person name="Kumar L."/>
            <person name="Lee Y.-H."/>
            <person name="Li L."/>
            <person name="Manners J.M."/>
            <person name="Miranda-Saavedra D."/>
            <person name="Mukherjee M."/>
            <person name="Park G."/>
            <person name="Park J."/>
            <person name="Park S.-Y."/>
            <person name="Proctor R.H."/>
            <person name="Regev A."/>
            <person name="Ruiz-Roldan M.C."/>
            <person name="Sain D."/>
            <person name="Sakthikumar S."/>
            <person name="Sykes S."/>
            <person name="Schwartz D.C."/>
            <person name="Turgeon B.G."/>
            <person name="Wapinski I."/>
            <person name="Yoder O."/>
            <person name="Young S."/>
            <person name="Zeng Q."/>
            <person name="Zhou S."/>
            <person name="Galagan J."/>
            <person name="Cuomo C.A."/>
            <person name="Kistler H.C."/>
            <person name="Rep M."/>
        </authorList>
    </citation>
    <scope>GENOME REANNOTATION</scope>
    <source>
        <strain>ATCC MYA-4620 / CBS 123657 / FGSC 9075 / NRRL 31084 / PH-1</strain>
    </source>
</reference>
<reference key="3">
    <citation type="journal article" date="2015" name="BMC Genomics">
        <title>The completed genome sequence of the pathogenic ascomycete fungus Fusarium graminearum.</title>
        <authorList>
            <person name="King R."/>
            <person name="Urban M."/>
            <person name="Hammond-Kosack M.C.U."/>
            <person name="Hassani-Pak K."/>
            <person name="Hammond-Kosack K.E."/>
        </authorList>
    </citation>
    <scope>NUCLEOTIDE SEQUENCE [LARGE SCALE GENOMIC DNA]</scope>
    <source>
        <strain>ATCC MYA-4620 / CBS 123657 / FGSC 9075 / NRRL 31084 / PH-1</strain>
    </source>
</reference>